<keyword id="KW-0002">3D-structure</keyword>
<keyword id="KW-0930">Antiviral protein</keyword>
<keyword id="KW-0903">Direct protein sequencing</keyword>
<keyword id="KW-0378">Hydrolase</keyword>
<keyword id="KW-0611">Plant defense</keyword>
<keyword id="KW-0652">Protein synthesis inhibitor</keyword>
<keyword id="KW-0732">Signal</keyword>
<keyword id="KW-0800">Toxin</keyword>
<accession>P09989</accession>
<name>RIPT_TRIKI</name>
<reference key="1">
    <citation type="journal article" date="1991" name="Gene">
        <title>Cloning of trichosanthin cDNA and its expression in Escherichia coli.</title>
        <authorList>
            <person name="Shaw P.C."/>
            <person name="Yung M.H."/>
            <person name="Zhu R.H."/>
            <person name="Ho W.K.K."/>
            <person name="Ng T.B."/>
            <person name="Yeung H.W."/>
        </authorList>
    </citation>
    <scope>NUCLEOTIDE SEQUENCE [MRNA]</scope>
    <source>
        <strain>Maximowicz</strain>
    </source>
</reference>
<reference key="2">
    <citation type="journal article" date="1990" name="J. Biol. Chem.">
        <title>Isolation and DNA sequence of a gene encoding alpha-trichosanthin, a type I ribosome-inactivating protein.</title>
        <authorList>
            <person name="Chow T."/>
            <person name="Feldman R.A."/>
            <person name="Lovett M."/>
            <person name="Piatak M."/>
        </authorList>
    </citation>
    <scope>NUCLEOTIDE SEQUENCE [GENOMIC DNA]</scope>
    <source>
        <strain>Maximowicz</strain>
        <tissue>Leaf</tissue>
    </source>
</reference>
<reference key="3">
    <citation type="journal article" date="1990" name="J. Biol. Chem.">
        <title>Primary amino acid sequence of alpha-trichosanthin and molecular models for abrin A-chain and alpha-trichosanthin.</title>
        <authorList>
            <person name="Collins E.J."/>
            <person name="Robertus J.D."/>
            <person name="Lopresti M."/>
            <person name="Stone K.L."/>
            <person name="Williams K.R."/>
            <person name="Wu P."/>
            <person name="Hwang K."/>
            <person name="Piatak M."/>
        </authorList>
    </citation>
    <scope>PROTEIN SEQUENCE OF 24-270</scope>
    <source>
        <strain>Maximowicz</strain>
        <tissue>Tuberous root</tissue>
    </source>
</reference>
<reference key="4">
    <citation type="journal article" date="1986" name="Pure Appl. Chem.">
        <title>Scientific evaluation of Tian Hua Fen (THF): history, chemistry and application.</title>
        <authorList>
            <person name="Wang Y."/>
            <person name="Qian R.Q."/>
            <person name="Gu Z.W."/>
            <person name="Jin S.W."/>
            <person name="Zhang L.Q."/>
            <person name="Xia Z.X."/>
            <person name="Tian G.Y."/>
            <person name="Ni C.Z."/>
        </authorList>
    </citation>
    <scope>PROTEIN SEQUENCE OF 24-270</scope>
    <source>
        <tissue>Tuberous root</tissue>
    </source>
</reference>
<reference key="5">
    <citation type="journal article" date="1994" name="Proteins">
        <title>Structure of trichosanthin at 1.88-A resolution.</title>
        <authorList>
            <person name="Zhou F."/>
            <person name="Fu Z."/>
            <person name="Chen M."/>
            <person name="Lin Y."/>
            <person name="Pan K."/>
        </authorList>
    </citation>
    <scope>X-RAY CRYSTALLOGRAPHY (1.88 ANGSTROMS)</scope>
</reference>
<reference key="6">
    <citation type="journal article" date="1995" name="Biochem. J.">
        <title>Studies on crystal structures, active-centre geometry and depurinating mechanism of two ribosome-inactivating proteins.</title>
        <authorList>
            <person name="Huang Q."/>
            <person name="Liu S."/>
            <person name="Tang Y."/>
            <person name="Jin S."/>
            <person name="Wang Y."/>
        </authorList>
    </citation>
    <scope>X-RAY CRYSTALLOGRAPHY (1.6 ANGSTROMS)</scope>
</reference>
<protein>
    <recommendedName>
        <fullName>Ribosome-inactivating protein alpha-trichosanthin</fullName>
        <shortName>Alpha-TCS</shortName>
        <ecNumber>3.2.2.22</ecNumber>
    </recommendedName>
    <alternativeName>
        <fullName>rRNA N-glycosidase</fullName>
    </alternativeName>
</protein>
<feature type="signal peptide" evidence="2 3">
    <location>
        <begin position="1"/>
        <end position="23"/>
    </location>
</feature>
<feature type="chain" id="PRO_0000030765" description="Ribosome-inactivating protein alpha-trichosanthin">
    <location>
        <begin position="24"/>
        <end position="270"/>
    </location>
</feature>
<feature type="propeptide" id="PRO_0000030766" description="Removed in mature form">
    <location>
        <begin position="271"/>
        <end position="289"/>
    </location>
</feature>
<feature type="active site" evidence="1">
    <location>
        <position position="183"/>
    </location>
</feature>
<feature type="sequence conflict" description="In Ref. 4; AA sequence." evidence="4" ref="4">
    <original>IPLL</original>
    <variation>LPLI</variation>
    <location>
        <begin position="57"/>
        <end position="60"/>
    </location>
</feature>
<feature type="sequence conflict" description="In Ref. 4; AA sequence." evidence="4" ref="4">
    <location>
        <begin position="82"/>
        <end position="84"/>
    </location>
</feature>
<feature type="sequence conflict" description="In Ref. 4; AA sequence." evidence="4" ref="4">
    <original>I</original>
    <variation>L</variation>
    <location>
        <position position="87"/>
    </location>
</feature>
<feature type="sequence conflict" description="In Ref. 4; AA sequence." evidence="4" ref="4">
    <original>V</original>
    <variation>VDAGLPRNAVL</variation>
    <location>
        <position position="92"/>
    </location>
</feature>
<feature type="sequence conflict" description="In Ref. 4; AA sequence." evidence="4" ref="4">
    <original>KI</original>
    <variation>GL</variation>
    <location>
        <begin position="143"/>
        <end position="144"/>
    </location>
</feature>
<feature type="sequence conflict" description="In Ref. 4; AA sequence." evidence="4" ref="4">
    <original>K</original>
    <variation>S</variation>
    <location>
        <position position="196"/>
    </location>
</feature>
<feature type="sequence conflict" description="In Ref. 4; AA sequence." evidence="4" ref="4">
    <original>WS</original>
    <variation>LWL</variation>
    <location>
        <begin position="215"/>
        <end position="216"/>
    </location>
</feature>
<feature type="sequence conflict" description="In Ref. 4; AA sequence." evidence="4" ref="4">
    <original>Q</original>
    <variation>T</variation>
    <location>
        <position position="231"/>
    </location>
</feature>
<feature type="sequence conflict" description="In Ref. 2; AAA34206." evidence="4" ref="2">
    <original>S</original>
    <variation>T</variation>
    <location>
        <position position="234"/>
    </location>
</feature>
<feature type="sequence conflict" description="In Ref. 4; AA sequence." evidence="4" ref="4">
    <location>
        <begin position="246"/>
        <end position="266"/>
    </location>
</feature>
<feature type="sequence conflict" description="In Ref. 2; AAA34206." evidence="4" ref="2">
    <original>T</original>
    <variation>M</variation>
    <location>
        <position position="247"/>
    </location>
</feature>
<feature type="strand" evidence="5">
    <location>
        <begin position="25"/>
        <end position="28"/>
    </location>
</feature>
<feature type="helix" evidence="5">
    <location>
        <begin position="34"/>
        <end position="46"/>
    </location>
</feature>
<feature type="strand" evidence="5">
    <location>
        <begin position="50"/>
        <end position="54"/>
    </location>
</feature>
<feature type="strand" evidence="5">
    <location>
        <begin position="57"/>
        <end position="60"/>
    </location>
</feature>
<feature type="helix" evidence="5">
    <location>
        <begin position="66"/>
        <end position="69"/>
    </location>
</feature>
<feature type="strand" evidence="5">
    <location>
        <begin position="70"/>
        <end position="76"/>
    </location>
</feature>
<feature type="strand" evidence="5">
    <location>
        <begin position="82"/>
        <end position="88"/>
    </location>
</feature>
<feature type="turn" evidence="5">
    <location>
        <begin position="89"/>
        <end position="91"/>
    </location>
</feature>
<feature type="strand" evidence="5">
    <location>
        <begin position="94"/>
        <end position="99"/>
    </location>
</feature>
<feature type="strand" evidence="5">
    <location>
        <begin position="102"/>
        <end position="105"/>
    </location>
</feature>
<feature type="helix" evidence="5">
    <location>
        <begin position="109"/>
        <end position="114"/>
    </location>
</feature>
<feature type="turn" evidence="5">
    <location>
        <begin position="115"/>
        <end position="117"/>
    </location>
</feature>
<feature type="strand" evidence="5">
    <location>
        <begin position="123"/>
        <end position="127"/>
    </location>
</feature>
<feature type="helix" evidence="5">
    <location>
        <begin position="134"/>
        <end position="141"/>
    </location>
</feature>
<feature type="helix" evidence="5">
    <location>
        <begin position="145"/>
        <end position="147"/>
    </location>
</feature>
<feature type="helix" evidence="5">
    <location>
        <begin position="152"/>
        <end position="163"/>
    </location>
</feature>
<feature type="helix" evidence="5">
    <location>
        <begin position="167"/>
        <end position="180"/>
    </location>
</feature>
<feature type="helix" evidence="5">
    <location>
        <begin position="182"/>
        <end position="186"/>
    </location>
</feature>
<feature type="helix" evidence="5">
    <location>
        <begin position="188"/>
        <end position="195"/>
    </location>
</feature>
<feature type="strand" evidence="6">
    <location>
        <begin position="198"/>
        <end position="200"/>
    </location>
</feature>
<feature type="helix" evidence="5">
    <location>
        <begin position="206"/>
        <end position="226"/>
    </location>
</feature>
<feature type="turn" evidence="5">
    <location>
        <begin position="227"/>
        <end position="230"/>
    </location>
</feature>
<feature type="strand" evidence="5">
    <location>
        <begin position="231"/>
        <end position="239"/>
    </location>
</feature>
<feature type="strand" evidence="5">
    <location>
        <begin position="245"/>
        <end position="250"/>
    </location>
</feature>
<feature type="helix" evidence="5">
    <location>
        <begin position="254"/>
        <end position="258"/>
    </location>
</feature>
<feature type="turn" evidence="5">
    <location>
        <begin position="266"/>
        <end position="268"/>
    </location>
</feature>
<proteinExistence type="evidence at protein level"/>
<dbReference type="EC" id="3.2.2.22"/>
<dbReference type="EMBL" id="M34858">
    <property type="protein sequence ID" value="AAA34207.1"/>
    <property type="molecule type" value="mRNA"/>
</dbReference>
<dbReference type="EMBL" id="J05434">
    <property type="protein sequence ID" value="AAA34206.1"/>
    <property type="molecule type" value="Genomic_DNA"/>
</dbReference>
<dbReference type="PIR" id="JT0566">
    <property type="entry name" value="RLTZT"/>
</dbReference>
<dbReference type="PDB" id="1GIS">
    <property type="method" value="X-ray"/>
    <property type="resolution" value="1.70 A"/>
    <property type="chains" value="A=24-270"/>
</dbReference>
<dbReference type="PDB" id="1GIU">
    <property type="method" value="X-ray"/>
    <property type="resolution" value="1.80 A"/>
    <property type="chains" value="A=24-270"/>
</dbReference>
<dbReference type="PDB" id="1J4G">
    <property type="method" value="X-ray"/>
    <property type="resolution" value="2.00 A"/>
    <property type="chains" value="A/B/C/D=24-270"/>
</dbReference>
<dbReference type="PDB" id="1MRJ">
    <property type="method" value="X-ray"/>
    <property type="resolution" value="1.60 A"/>
    <property type="chains" value="A=24-270"/>
</dbReference>
<dbReference type="PDB" id="1MRK">
    <property type="method" value="X-ray"/>
    <property type="resolution" value="1.60 A"/>
    <property type="chains" value="A=24-270"/>
</dbReference>
<dbReference type="PDB" id="1NLI">
    <property type="method" value="X-ray"/>
    <property type="resolution" value="1.93 A"/>
    <property type="chains" value="A=24-270"/>
</dbReference>
<dbReference type="PDB" id="1QD2">
    <property type="method" value="X-ray"/>
    <property type="resolution" value="1.86 A"/>
    <property type="chains" value="A=24-270"/>
</dbReference>
<dbReference type="PDB" id="1TCS">
    <property type="method" value="X-ray"/>
    <property type="resolution" value="1.70 A"/>
    <property type="chains" value="A=24-270"/>
</dbReference>
<dbReference type="PDB" id="2JDL">
    <property type="method" value="X-ray"/>
    <property type="resolution" value="2.20 A"/>
    <property type="chains" value="A/B=25-270"/>
</dbReference>
<dbReference type="PDB" id="2JJR">
    <property type="method" value="X-ray"/>
    <property type="resolution" value="2.30 A"/>
    <property type="chains" value="A=24-270"/>
</dbReference>
<dbReference type="PDB" id="2VS6">
    <property type="method" value="X-ray"/>
    <property type="resolution" value="2.40 A"/>
    <property type="chains" value="A/B=24-270"/>
</dbReference>
<dbReference type="PDBsum" id="1GIS"/>
<dbReference type="PDBsum" id="1GIU"/>
<dbReference type="PDBsum" id="1J4G"/>
<dbReference type="PDBsum" id="1MRJ"/>
<dbReference type="PDBsum" id="1MRK"/>
<dbReference type="PDBsum" id="1NLI"/>
<dbReference type="PDBsum" id="1QD2"/>
<dbReference type="PDBsum" id="1TCS"/>
<dbReference type="PDBsum" id="2JDL"/>
<dbReference type="PDBsum" id="2JJR"/>
<dbReference type="PDBsum" id="2VS6"/>
<dbReference type="SMR" id="P09989"/>
<dbReference type="MINT" id="P09989"/>
<dbReference type="Allergome" id="2807">
    <property type="allergen name" value="Tri k RIP"/>
</dbReference>
<dbReference type="ABCD" id="P09989">
    <property type="antibodies" value="4 sequenced antibodies"/>
</dbReference>
<dbReference type="BRENDA" id="3.2.2.22">
    <property type="organism ID" value="6463"/>
</dbReference>
<dbReference type="EvolutionaryTrace" id="P09989"/>
<dbReference type="GO" id="GO:0030598">
    <property type="term" value="F:rRNA N-glycosylase activity"/>
    <property type="evidence" value="ECO:0007669"/>
    <property type="project" value="UniProtKB-EC"/>
</dbReference>
<dbReference type="GO" id="GO:0090729">
    <property type="term" value="F:toxin activity"/>
    <property type="evidence" value="ECO:0007669"/>
    <property type="project" value="UniProtKB-KW"/>
</dbReference>
<dbReference type="GO" id="GO:0006952">
    <property type="term" value="P:defense response"/>
    <property type="evidence" value="ECO:0007669"/>
    <property type="project" value="UniProtKB-KW"/>
</dbReference>
<dbReference type="GO" id="GO:0017148">
    <property type="term" value="P:negative regulation of translation"/>
    <property type="evidence" value="ECO:0007669"/>
    <property type="project" value="UniProtKB-KW"/>
</dbReference>
<dbReference type="GO" id="GO:0050688">
    <property type="term" value="P:regulation of defense response to virus"/>
    <property type="evidence" value="ECO:0007669"/>
    <property type="project" value="UniProtKB-KW"/>
</dbReference>
<dbReference type="Gene3D" id="3.40.420.10">
    <property type="entry name" value="Ricin (A subunit), domain 1"/>
    <property type="match status" value="1"/>
</dbReference>
<dbReference type="Gene3D" id="4.10.470.10">
    <property type="entry name" value="Ricin (A Subunit), domain 2"/>
    <property type="match status" value="1"/>
</dbReference>
<dbReference type="InterPro" id="IPR036041">
    <property type="entry name" value="Ribosome-inact_prot_sf"/>
</dbReference>
<dbReference type="InterPro" id="IPR017989">
    <property type="entry name" value="Ribosome_inactivat_1/2"/>
</dbReference>
<dbReference type="InterPro" id="IPR001574">
    <property type="entry name" value="Ribosome_inactivat_prot"/>
</dbReference>
<dbReference type="InterPro" id="IPR017988">
    <property type="entry name" value="Ribosome_inactivat_prot_CS"/>
</dbReference>
<dbReference type="InterPro" id="IPR016138">
    <property type="entry name" value="Ribosome_inactivat_prot_sub1"/>
</dbReference>
<dbReference type="InterPro" id="IPR016139">
    <property type="entry name" value="Ribosome_inactivat_prot_sub2"/>
</dbReference>
<dbReference type="PANTHER" id="PTHR33453">
    <property type="match status" value="1"/>
</dbReference>
<dbReference type="PANTHER" id="PTHR33453:SF34">
    <property type="entry name" value="RIBOSOME-INACTIVATING PROTEIN"/>
    <property type="match status" value="1"/>
</dbReference>
<dbReference type="Pfam" id="PF00161">
    <property type="entry name" value="RIP"/>
    <property type="match status" value="1"/>
</dbReference>
<dbReference type="PRINTS" id="PR00396">
    <property type="entry name" value="SHIGARICIN"/>
</dbReference>
<dbReference type="SUPFAM" id="SSF56371">
    <property type="entry name" value="Ribosome inactivating proteins (RIP)"/>
    <property type="match status" value="1"/>
</dbReference>
<dbReference type="PROSITE" id="PS00275">
    <property type="entry name" value="SHIGA_RICIN"/>
    <property type="match status" value="1"/>
</dbReference>
<organism>
    <name type="scientific">Trichosanthes kirilowii</name>
    <name type="common">Chinese snake gourd</name>
    <name type="synonym">Chinese cucumber</name>
    <dbReference type="NCBI Taxonomy" id="3677"/>
    <lineage>
        <taxon>Eukaryota</taxon>
        <taxon>Viridiplantae</taxon>
        <taxon>Streptophyta</taxon>
        <taxon>Embryophyta</taxon>
        <taxon>Tracheophyta</taxon>
        <taxon>Spermatophyta</taxon>
        <taxon>Magnoliopsida</taxon>
        <taxon>eudicotyledons</taxon>
        <taxon>Gunneridae</taxon>
        <taxon>Pentapetalae</taxon>
        <taxon>rosids</taxon>
        <taxon>fabids</taxon>
        <taxon>Cucurbitales</taxon>
        <taxon>Cucurbitaceae</taxon>
        <taxon>Sicyoeae</taxon>
        <taxon>Trichosanthes</taxon>
    </lineage>
</organism>
<evidence type="ECO:0000250" key="1"/>
<evidence type="ECO:0000269" key="2">
    <source>
    </source>
</evidence>
<evidence type="ECO:0000269" key="3">
    <source ref="4"/>
</evidence>
<evidence type="ECO:0000305" key="4"/>
<evidence type="ECO:0007829" key="5">
    <source>
        <dbReference type="PDB" id="1MRJ"/>
    </source>
</evidence>
<evidence type="ECO:0007829" key="6">
    <source>
        <dbReference type="PDB" id="1MRK"/>
    </source>
</evidence>
<sequence length="289" mass="31676">MIRFLVLSLLILTLFLTTPAVEGDVSFRLSGATSSSYGVFISNLRKALPNERKLYDIPLLRSSLPGSQRYALIHLTNYADETISVAIDVTNVYIMGYRAGDTSYFFNEASATEAAKYVFKDAMRKVTLPYSGNYERLQTAAGKIRENIPLGLPALDSAITTLFYYNANSAASALMVLIQSTSEAARYKFIEQQIGKRVDKTFLPSLAIISLENSWSALSKQIQIASTNNGQFESPVVLINAQNQRVTITNVDAGVVTSNIALLLNRNNMAAMDDDVPMTQSFGCGSYAI</sequence>
<comment type="function">
    <text>Inactivates eukaryotic 60S ribosomal subunits.</text>
</comment>
<comment type="catalytic activity">
    <reaction>
        <text>Endohydrolysis of the N-glycosidic bond at one specific adenosine on the 28S rRNA.</text>
        <dbReference type="EC" id="3.2.2.22"/>
    </reaction>
</comment>
<comment type="miscellaneous">
    <text>Abortion-inducing protein. Inhibits HIV-1 infection and replication.</text>
</comment>
<comment type="similarity">
    <text evidence="4">Belongs to the ribosome-inactivating protein family. Type 1 RIP subfamily.</text>
</comment>